<proteinExistence type="inferred from homology"/>
<accession>Q5LQY2</accession>
<sequence>MICETVEEFAAALPPFSALAGLDLGDKTIGVAVSDRMRGVATPLETIRRKKFGLDASALLAIVEQREIAGIVLGLPRNMDGSEGPRCQSTRAFARNLSRLTEVAITFWDERLSTVAAEKALLEADTTRKRRSEVIDHVAAAYILQGALDRLRNL</sequence>
<organism>
    <name type="scientific">Ruegeria pomeroyi (strain ATCC 700808 / DSM 15171 / DSS-3)</name>
    <name type="common">Silicibacter pomeroyi</name>
    <dbReference type="NCBI Taxonomy" id="246200"/>
    <lineage>
        <taxon>Bacteria</taxon>
        <taxon>Pseudomonadati</taxon>
        <taxon>Pseudomonadota</taxon>
        <taxon>Alphaproteobacteria</taxon>
        <taxon>Rhodobacterales</taxon>
        <taxon>Roseobacteraceae</taxon>
        <taxon>Ruegeria</taxon>
    </lineage>
</organism>
<gene>
    <name type="ordered locus">SPO2350</name>
</gene>
<reference key="1">
    <citation type="journal article" date="2004" name="Nature">
        <title>Genome sequence of Silicibacter pomeroyi reveals adaptations to the marine environment.</title>
        <authorList>
            <person name="Moran M.A."/>
            <person name="Buchan A."/>
            <person name="Gonzalez J.M."/>
            <person name="Heidelberg J.F."/>
            <person name="Whitman W.B."/>
            <person name="Kiene R.P."/>
            <person name="Henriksen J.R."/>
            <person name="King G.M."/>
            <person name="Belas R."/>
            <person name="Fuqua C."/>
            <person name="Brinkac L.M."/>
            <person name="Lewis M."/>
            <person name="Johri S."/>
            <person name="Weaver B."/>
            <person name="Pai G."/>
            <person name="Eisen J.A."/>
            <person name="Rahe E."/>
            <person name="Sheldon W.M."/>
            <person name="Ye W."/>
            <person name="Miller T.R."/>
            <person name="Carlton J."/>
            <person name="Rasko D.A."/>
            <person name="Paulsen I.T."/>
            <person name="Ren Q."/>
            <person name="Daugherty S.C."/>
            <person name="DeBoy R.T."/>
            <person name="Dodson R.J."/>
            <person name="Durkin A.S."/>
            <person name="Madupu R."/>
            <person name="Nelson W.C."/>
            <person name="Sullivan S.A."/>
            <person name="Rosovitz M.J."/>
            <person name="Haft D.H."/>
            <person name="Selengut J."/>
            <person name="Ward N."/>
        </authorList>
    </citation>
    <scope>NUCLEOTIDE SEQUENCE [LARGE SCALE GENOMIC DNA]</scope>
    <source>
        <strain>ATCC 700808 / DSM 15171 / DSS-3</strain>
    </source>
</reference>
<reference key="2">
    <citation type="journal article" date="2014" name="Stand. Genomic Sci.">
        <title>An updated genome annotation for the model marine bacterium Ruegeria pomeroyi DSS-3.</title>
        <authorList>
            <person name="Rivers A.R."/>
            <person name="Smith C.B."/>
            <person name="Moran M.A."/>
        </authorList>
    </citation>
    <scope>GENOME REANNOTATION</scope>
    <source>
        <strain>ATCC 700808 / DSM 15171 / DSS-3</strain>
    </source>
</reference>
<dbReference type="EC" id="3.1.-.-" evidence="1"/>
<dbReference type="EMBL" id="CP000031">
    <property type="protein sequence ID" value="AAV95612.1"/>
    <property type="molecule type" value="Genomic_DNA"/>
</dbReference>
<dbReference type="RefSeq" id="WP_011048067.1">
    <property type="nucleotide sequence ID" value="NC_003911.12"/>
</dbReference>
<dbReference type="SMR" id="Q5LQY2"/>
<dbReference type="STRING" id="246200.SPO2350"/>
<dbReference type="PaxDb" id="246200-SPO2350"/>
<dbReference type="KEGG" id="sil:SPO2350"/>
<dbReference type="eggNOG" id="COG0816">
    <property type="taxonomic scope" value="Bacteria"/>
</dbReference>
<dbReference type="HOGENOM" id="CLU_098240_1_1_5"/>
<dbReference type="OrthoDB" id="9796140at2"/>
<dbReference type="Proteomes" id="UP000001023">
    <property type="component" value="Chromosome"/>
</dbReference>
<dbReference type="GO" id="GO:0005829">
    <property type="term" value="C:cytosol"/>
    <property type="evidence" value="ECO:0007669"/>
    <property type="project" value="TreeGrafter"/>
</dbReference>
<dbReference type="GO" id="GO:0004518">
    <property type="term" value="F:nuclease activity"/>
    <property type="evidence" value="ECO:0007669"/>
    <property type="project" value="UniProtKB-KW"/>
</dbReference>
<dbReference type="GO" id="GO:0000967">
    <property type="term" value="P:rRNA 5'-end processing"/>
    <property type="evidence" value="ECO:0007669"/>
    <property type="project" value="UniProtKB-UniRule"/>
</dbReference>
<dbReference type="CDD" id="cd16964">
    <property type="entry name" value="YqgF"/>
    <property type="match status" value="1"/>
</dbReference>
<dbReference type="Gene3D" id="3.30.420.140">
    <property type="entry name" value="YqgF/RNase H-like domain"/>
    <property type="match status" value="1"/>
</dbReference>
<dbReference type="HAMAP" id="MF_00651">
    <property type="entry name" value="Nuclease_YqgF"/>
    <property type="match status" value="1"/>
</dbReference>
<dbReference type="InterPro" id="IPR012337">
    <property type="entry name" value="RNaseH-like_sf"/>
</dbReference>
<dbReference type="InterPro" id="IPR005227">
    <property type="entry name" value="YqgF"/>
</dbReference>
<dbReference type="InterPro" id="IPR006641">
    <property type="entry name" value="YqgF/RNaseH-like_dom"/>
</dbReference>
<dbReference type="InterPro" id="IPR037027">
    <property type="entry name" value="YqgF/RNaseH-like_dom_sf"/>
</dbReference>
<dbReference type="NCBIfam" id="TIGR00250">
    <property type="entry name" value="RNAse_H_YqgF"/>
    <property type="match status" value="1"/>
</dbReference>
<dbReference type="PANTHER" id="PTHR33317">
    <property type="entry name" value="POLYNUCLEOTIDYL TRANSFERASE, RIBONUCLEASE H-LIKE SUPERFAMILY PROTEIN"/>
    <property type="match status" value="1"/>
</dbReference>
<dbReference type="PANTHER" id="PTHR33317:SF4">
    <property type="entry name" value="POLYNUCLEOTIDYL TRANSFERASE, RIBONUCLEASE H-LIKE SUPERFAMILY PROTEIN"/>
    <property type="match status" value="1"/>
</dbReference>
<dbReference type="Pfam" id="PF03652">
    <property type="entry name" value="RuvX"/>
    <property type="match status" value="1"/>
</dbReference>
<dbReference type="SMART" id="SM00732">
    <property type="entry name" value="YqgFc"/>
    <property type="match status" value="1"/>
</dbReference>
<dbReference type="SUPFAM" id="SSF53098">
    <property type="entry name" value="Ribonuclease H-like"/>
    <property type="match status" value="1"/>
</dbReference>
<name>YQGF_RUEPO</name>
<keyword id="KW-0963">Cytoplasm</keyword>
<keyword id="KW-0378">Hydrolase</keyword>
<keyword id="KW-0540">Nuclease</keyword>
<keyword id="KW-1185">Reference proteome</keyword>
<keyword id="KW-0690">Ribosome biogenesis</keyword>
<comment type="function">
    <text evidence="1">Could be a nuclease involved in processing of the 5'-end of pre-16S rRNA.</text>
</comment>
<comment type="subcellular location">
    <subcellularLocation>
        <location evidence="1">Cytoplasm</location>
    </subcellularLocation>
</comment>
<comment type="similarity">
    <text evidence="1">Belongs to the YqgF nuclease family.</text>
</comment>
<evidence type="ECO:0000255" key="1">
    <source>
        <dbReference type="HAMAP-Rule" id="MF_00651"/>
    </source>
</evidence>
<protein>
    <recommendedName>
        <fullName evidence="1">Putative pre-16S rRNA nuclease</fullName>
        <ecNumber evidence="1">3.1.-.-</ecNumber>
    </recommendedName>
</protein>
<feature type="chain" id="PRO_0000172136" description="Putative pre-16S rRNA nuclease">
    <location>
        <begin position="1"/>
        <end position="154"/>
    </location>
</feature>